<reference key="1">
    <citation type="journal article" date="2008" name="Proc. Natl. Acad. Sci. U.S.A.">
        <title>The genome sequence of Bifidobacterium longum subsp. infantis reveals adaptations for milk utilization within the infant microbiome.</title>
        <authorList>
            <person name="Sela D.A."/>
            <person name="Chapman J."/>
            <person name="Adeuya A."/>
            <person name="Kim J.H."/>
            <person name="Chen F."/>
            <person name="Whitehead T.R."/>
            <person name="Lapidus A."/>
            <person name="Rokhsar D.S."/>
            <person name="Lebrilla C.B."/>
            <person name="German J.B."/>
            <person name="Price N.P."/>
            <person name="Richardson P.M."/>
            <person name="Mills D.A."/>
        </authorList>
    </citation>
    <scope>NUCLEOTIDE SEQUENCE [LARGE SCALE GENOMIC DNA]</scope>
    <source>
        <strain>ATCC 15697 / DSM 20088 / JCM 1222 / NCTC 11817 / S12</strain>
    </source>
</reference>
<reference key="2">
    <citation type="journal article" date="2011" name="Nature">
        <title>Bifidobacteria can protect from enteropathogenic infection through production of acetate.</title>
        <authorList>
            <person name="Fukuda S."/>
            <person name="Toh H."/>
            <person name="Hase K."/>
            <person name="Oshima K."/>
            <person name="Nakanishi Y."/>
            <person name="Yoshimura K."/>
            <person name="Tobe T."/>
            <person name="Clarke J.M."/>
            <person name="Topping D.L."/>
            <person name="Suzuki T."/>
            <person name="Taylor T.D."/>
            <person name="Itoh K."/>
            <person name="Kikuchi J."/>
            <person name="Morita H."/>
            <person name="Hattori M."/>
            <person name="Ohno H."/>
        </authorList>
    </citation>
    <scope>NUCLEOTIDE SEQUENCE [LARGE SCALE GENOMIC DNA]</scope>
    <source>
        <strain>ATCC 15697 / DSM 20088 / JCM 1222 / NCTC 11817 / S12</strain>
    </source>
</reference>
<protein>
    <recommendedName>
        <fullName evidence="1">Small ribosomal subunit protein bS16</fullName>
    </recommendedName>
    <alternativeName>
        <fullName evidence="3">30S ribosomal protein S16</fullName>
    </alternativeName>
</protein>
<comment type="similarity">
    <text evidence="1">Belongs to the bacterial ribosomal protein bS16 family.</text>
</comment>
<gene>
    <name evidence="1" type="primary">rpsP</name>
    <name type="ordered locus">Blon_0383</name>
    <name type="ordered locus">BLIJ_0390</name>
</gene>
<evidence type="ECO:0000255" key="1">
    <source>
        <dbReference type="HAMAP-Rule" id="MF_00385"/>
    </source>
</evidence>
<evidence type="ECO:0000256" key="2">
    <source>
        <dbReference type="SAM" id="MobiDB-lite"/>
    </source>
</evidence>
<evidence type="ECO:0000305" key="3"/>
<accession>B7GMZ8</accession>
<accession>E8MPG0</accession>
<dbReference type="EMBL" id="CP001095">
    <property type="protein sequence ID" value="ACJ51504.1"/>
    <property type="molecule type" value="Genomic_DNA"/>
</dbReference>
<dbReference type="EMBL" id="AP010889">
    <property type="protein sequence ID" value="BAJ67984.1"/>
    <property type="molecule type" value="Genomic_DNA"/>
</dbReference>
<dbReference type="RefSeq" id="WP_012576806.1">
    <property type="nucleotide sequence ID" value="NC_011593.1"/>
</dbReference>
<dbReference type="SMR" id="B7GMZ8"/>
<dbReference type="KEGG" id="bln:Blon_0383"/>
<dbReference type="KEGG" id="blon:BLIJ_0390"/>
<dbReference type="PATRIC" id="fig|391904.8.peg.395"/>
<dbReference type="HOGENOM" id="CLU_100590_1_0_11"/>
<dbReference type="Proteomes" id="UP000001360">
    <property type="component" value="Chromosome"/>
</dbReference>
<dbReference type="GO" id="GO:0005737">
    <property type="term" value="C:cytoplasm"/>
    <property type="evidence" value="ECO:0007669"/>
    <property type="project" value="UniProtKB-ARBA"/>
</dbReference>
<dbReference type="GO" id="GO:0015935">
    <property type="term" value="C:small ribosomal subunit"/>
    <property type="evidence" value="ECO:0007669"/>
    <property type="project" value="TreeGrafter"/>
</dbReference>
<dbReference type="GO" id="GO:0003735">
    <property type="term" value="F:structural constituent of ribosome"/>
    <property type="evidence" value="ECO:0007669"/>
    <property type="project" value="InterPro"/>
</dbReference>
<dbReference type="GO" id="GO:0006412">
    <property type="term" value="P:translation"/>
    <property type="evidence" value="ECO:0007669"/>
    <property type="project" value="UniProtKB-UniRule"/>
</dbReference>
<dbReference type="Gene3D" id="3.30.1320.10">
    <property type="match status" value="1"/>
</dbReference>
<dbReference type="HAMAP" id="MF_00385">
    <property type="entry name" value="Ribosomal_bS16"/>
    <property type="match status" value="1"/>
</dbReference>
<dbReference type="InterPro" id="IPR000307">
    <property type="entry name" value="Ribosomal_bS16"/>
</dbReference>
<dbReference type="InterPro" id="IPR020592">
    <property type="entry name" value="Ribosomal_bS16_CS"/>
</dbReference>
<dbReference type="InterPro" id="IPR023803">
    <property type="entry name" value="Ribosomal_bS16_dom_sf"/>
</dbReference>
<dbReference type="NCBIfam" id="NF011093">
    <property type="entry name" value="PRK14520.1"/>
    <property type="match status" value="1"/>
</dbReference>
<dbReference type="NCBIfam" id="TIGR00002">
    <property type="entry name" value="S16"/>
    <property type="match status" value="1"/>
</dbReference>
<dbReference type="PANTHER" id="PTHR12919">
    <property type="entry name" value="30S RIBOSOMAL PROTEIN S16"/>
    <property type="match status" value="1"/>
</dbReference>
<dbReference type="PANTHER" id="PTHR12919:SF20">
    <property type="entry name" value="SMALL RIBOSOMAL SUBUNIT PROTEIN BS16M"/>
    <property type="match status" value="1"/>
</dbReference>
<dbReference type="Pfam" id="PF00886">
    <property type="entry name" value="Ribosomal_S16"/>
    <property type="match status" value="1"/>
</dbReference>
<dbReference type="SUPFAM" id="SSF54565">
    <property type="entry name" value="Ribosomal protein S16"/>
    <property type="match status" value="1"/>
</dbReference>
<dbReference type="PROSITE" id="PS00732">
    <property type="entry name" value="RIBOSOMAL_S16"/>
    <property type="match status" value="1"/>
</dbReference>
<organism>
    <name type="scientific">Bifidobacterium longum subsp. infantis (strain ATCC 15697 / DSM 20088 / JCM 1222 / NCTC 11817 / S12)</name>
    <dbReference type="NCBI Taxonomy" id="391904"/>
    <lineage>
        <taxon>Bacteria</taxon>
        <taxon>Bacillati</taxon>
        <taxon>Actinomycetota</taxon>
        <taxon>Actinomycetes</taxon>
        <taxon>Bifidobacteriales</taxon>
        <taxon>Bifidobacteriaceae</taxon>
        <taxon>Bifidobacterium</taxon>
    </lineage>
</organism>
<proteinExistence type="inferred from homology"/>
<keyword id="KW-0687">Ribonucleoprotein</keyword>
<keyword id="KW-0689">Ribosomal protein</keyword>
<sequence>MATKIRLKRQGKKFYAFYRVVVVDSRKKRDGKVIEEIGIYNPNTQPSTIQIKSDRAQYWLGVGAQPSEPVFKLLNITGDWQKYKGLEGAEGTLKTVEAGPDAEARIAAVENQAQKLKAAKSEAAAKAKAEAEAAAAAEEAPAEEAAEEAPAEA</sequence>
<feature type="chain" id="PRO_1000196340" description="Small ribosomal subunit protein bS16">
    <location>
        <begin position="1"/>
        <end position="153"/>
    </location>
</feature>
<feature type="region of interest" description="Disordered" evidence="2">
    <location>
        <begin position="130"/>
        <end position="153"/>
    </location>
</feature>
<feature type="compositionally biased region" description="Acidic residues" evidence="2">
    <location>
        <begin position="140"/>
        <end position="153"/>
    </location>
</feature>
<name>RS16_BIFLS</name>